<accession>B1WVE8</accession>
<keyword id="KW-1185">Reference proteome</keyword>
<feature type="chain" id="PRO_0000373781" description="Putative regulatory protein cce_4590">
    <location>
        <begin position="1"/>
        <end position="90"/>
    </location>
</feature>
<reference key="1">
    <citation type="journal article" date="2008" name="Proc. Natl. Acad. Sci. U.S.A.">
        <title>The genome of Cyanothece 51142, a unicellular diazotrophic cyanobacterium important in the marine nitrogen cycle.</title>
        <authorList>
            <person name="Welsh E.A."/>
            <person name="Liberton M."/>
            <person name="Stoeckel J."/>
            <person name="Loh T."/>
            <person name="Elvitigala T."/>
            <person name="Wang C."/>
            <person name="Wollam A."/>
            <person name="Fulton R.S."/>
            <person name="Clifton S.W."/>
            <person name="Jacobs J.M."/>
            <person name="Aurora R."/>
            <person name="Ghosh B.K."/>
            <person name="Sherman L.A."/>
            <person name="Smith R.D."/>
            <person name="Wilson R.K."/>
            <person name="Pakrasi H.B."/>
        </authorList>
    </citation>
    <scope>NUCLEOTIDE SEQUENCE [LARGE SCALE GENOMIC DNA]</scope>
    <source>
        <strain>ATCC 51142 / BH68</strain>
    </source>
</reference>
<gene>
    <name type="ordered locus">cce_4590</name>
</gene>
<organism>
    <name type="scientific">Crocosphaera subtropica (strain ATCC 51142 / BH68)</name>
    <name type="common">Cyanothece sp. (strain ATCC 51142)</name>
    <dbReference type="NCBI Taxonomy" id="43989"/>
    <lineage>
        <taxon>Bacteria</taxon>
        <taxon>Bacillati</taxon>
        <taxon>Cyanobacteriota</taxon>
        <taxon>Cyanophyceae</taxon>
        <taxon>Oscillatoriophycideae</taxon>
        <taxon>Chroococcales</taxon>
        <taxon>Aphanothecaceae</taxon>
        <taxon>Crocosphaera</taxon>
        <taxon>Crocosphaera subtropica</taxon>
    </lineage>
</organism>
<sequence>MENIQLINIGFGNIVSANRVIAIVSPESAPIKRIITDARERGQLIDATYGRRTRAVIITDSSHVVLSAIQPETVAHRFVVNKETATINSN</sequence>
<evidence type="ECO:0000255" key="1">
    <source>
        <dbReference type="HAMAP-Rule" id="MF_01503"/>
    </source>
</evidence>
<dbReference type="EMBL" id="CP000806">
    <property type="protein sequence ID" value="ACB53938.1"/>
    <property type="molecule type" value="Genomic_DNA"/>
</dbReference>
<dbReference type="SMR" id="B1WVE8"/>
<dbReference type="STRING" id="43989.cce_4590"/>
<dbReference type="KEGG" id="cyt:cce_4590"/>
<dbReference type="eggNOG" id="COG2052">
    <property type="taxonomic scope" value="Bacteria"/>
</dbReference>
<dbReference type="HOGENOM" id="CLU_165326_0_0_3"/>
<dbReference type="OrthoDB" id="5432174at2"/>
<dbReference type="Proteomes" id="UP000001203">
    <property type="component" value="Chromosome circular"/>
</dbReference>
<dbReference type="HAMAP" id="MF_01503">
    <property type="entry name" value="RemA"/>
    <property type="match status" value="1"/>
</dbReference>
<dbReference type="InterPro" id="IPR007169">
    <property type="entry name" value="RemA-like"/>
</dbReference>
<dbReference type="NCBIfam" id="NF046064">
    <property type="entry name" value="MtxBflmRegRemA"/>
    <property type="match status" value="1"/>
</dbReference>
<dbReference type="NCBIfam" id="NF003315">
    <property type="entry name" value="PRK04323.1"/>
    <property type="match status" value="1"/>
</dbReference>
<dbReference type="PANTHER" id="PTHR38449:SF1">
    <property type="entry name" value="REGULATORY PROTEIN SSL2874-RELATED"/>
    <property type="match status" value="1"/>
</dbReference>
<dbReference type="PANTHER" id="PTHR38449">
    <property type="entry name" value="REGULATORY PROTEIN TM_1690-RELATED"/>
    <property type="match status" value="1"/>
</dbReference>
<dbReference type="Pfam" id="PF04025">
    <property type="entry name" value="RemA-like"/>
    <property type="match status" value="1"/>
</dbReference>
<proteinExistence type="inferred from homology"/>
<protein>
    <recommendedName>
        <fullName evidence="1">Putative regulatory protein cce_4590</fullName>
    </recommendedName>
</protein>
<comment type="similarity">
    <text evidence="1">Belongs to the RemA family.</text>
</comment>
<name>Y4590_CROS5</name>